<proteinExistence type="inferred from homology"/>
<dbReference type="EC" id="2.1.1.242" evidence="1"/>
<dbReference type="EMBL" id="CP000094">
    <property type="protein sequence ID" value="ABA72820.1"/>
    <property type="status" value="ALT_INIT"/>
    <property type="molecule type" value="Genomic_DNA"/>
</dbReference>
<dbReference type="SMR" id="Q3KHD6"/>
<dbReference type="KEGG" id="pfo:Pfl01_1077"/>
<dbReference type="eggNOG" id="COG0742">
    <property type="taxonomic scope" value="Bacteria"/>
</dbReference>
<dbReference type="HOGENOM" id="CLU_076324_0_1_6"/>
<dbReference type="Proteomes" id="UP000002704">
    <property type="component" value="Chromosome"/>
</dbReference>
<dbReference type="GO" id="GO:0005737">
    <property type="term" value="C:cytoplasm"/>
    <property type="evidence" value="ECO:0007669"/>
    <property type="project" value="UniProtKB-SubCell"/>
</dbReference>
<dbReference type="GO" id="GO:0008990">
    <property type="term" value="F:rRNA (guanine-N2-)-methyltransferase activity"/>
    <property type="evidence" value="ECO:0007669"/>
    <property type="project" value="UniProtKB-UniRule"/>
</dbReference>
<dbReference type="Gene3D" id="3.40.50.150">
    <property type="entry name" value="Vaccinia Virus protein VP39"/>
    <property type="match status" value="1"/>
</dbReference>
<dbReference type="HAMAP" id="MF_01523">
    <property type="entry name" value="16SrRNA_methyltr_J"/>
    <property type="match status" value="1"/>
</dbReference>
<dbReference type="InterPro" id="IPR007536">
    <property type="entry name" value="16SrRNA_methylTrfase_J"/>
</dbReference>
<dbReference type="InterPro" id="IPR029063">
    <property type="entry name" value="SAM-dependent_MTases_sf"/>
</dbReference>
<dbReference type="PANTHER" id="PTHR36112">
    <property type="entry name" value="RIBOSOMAL RNA SMALL SUBUNIT METHYLTRANSFERASE J"/>
    <property type="match status" value="1"/>
</dbReference>
<dbReference type="PANTHER" id="PTHR36112:SF1">
    <property type="entry name" value="RIBOSOMAL RNA SMALL SUBUNIT METHYLTRANSFERASE J"/>
    <property type="match status" value="1"/>
</dbReference>
<dbReference type="Pfam" id="PF04445">
    <property type="entry name" value="SAM_MT"/>
    <property type="match status" value="1"/>
</dbReference>
<dbReference type="SUPFAM" id="SSF53335">
    <property type="entry name" value="S-adenosyl-L-methionine-dependent methyltransferases"/>
    <property type="match status" value="1"/>
</dbReference>
<keyword id="KW-0963">Cytoplasm</keyword>
<keyword id="KW-0489">Methyltransferase</keyword>
<keyword id="KW-0698">rRNA processing</keyword>
<keyword id="KW-0949">S-adenosyl-L-methionine</keyword>
<keyword id="KW-0808">Transferase</keyword>
<reference key="1">
    <citation type="journal article" date="2009" name="Genome Biol.">
        <title>Genomic and genetic analyses of diversity and plant interactions of Pseudomonas fluorescens.</title>
        <authorList>
            <person name="Silby M.W."/>
            <person name="Cerdeno-Tarraga A.M."/>
            <person name="Vernikos G.S."/>
            <person name="Giddens S.R."/>
            <person name="Jackson R.W."/>
            <person name="Preston G.M."/>
            <person name="Zhang X.-X."/>
            <person name="Moon C.D."/>
            <person name="Gehrig S.M."/>
            <person name="Godfrey S.A.C."/>
            <person name="Knight C.G."/>
            <person name="Malone J.G."/>
            <person name="Robinson Z."/>
            <person name="Spiers A.J."/>
            <person name="Harris S."/>
            <person name="Challis G.L."/>
            <person name="Yaxley A.M."/>
            <person name="Harris D."/>
            <person name="Seeger K."/>
            <person name="Murphy L."/>
            <person name="Rutter S."/>
            <person name="Squares R."/>
            <person name="Quail M.A."/>
            <person name="Saunders E."/>
            <person name="Mavromatis K."/>
            <person name="Brettin T.S."/>
            <person name="Bentley S.D."/>
            <person name="Hothersall J."/>
            <person name="Stephens E."/>
            <person name="Thomas C.M."/>
            <person name="Parkhill J."/>
            <person name="Levy S.B."/>
            <person name="Rainey P.B."/>
            <person name="Thomson N.R."/>
        </authorList>
    </citation>
    <scope>NUCLEOTIDE SEQUENCE [LARGE SCALE GENOMIC DNA]</scope>
    <source>
        <strain>Pf0-1</strain>
    </source>
</reference>
<evidence type="ECO:0000255" key="1">
    <source>
        <dbReference type="HAMAP-Rule" id="MF_01523"/>
    </source>
</evidence>
<evidence type="ECO:0000305" key="2"/>
<protein>
    <recommendedName>
        <fullName evidence="1">Ribosomal RNA small subunit methyltransferase J</fullName>
        <ecNumber evidence="1">2.1.1.242</ecNumber>
    </recommendedName>
    <alternativeName>
        <fullName evidence="1">16S rRNA m2G1516 methyltransferase</fullName>
    </alternativeName>
    <alternativeName>
        <fullName evidence="1">rRNA (guanine-N(2)-)-methyltransferase</fullName>
    </alternativeName>
</protein>
<organism>
    <name type="scientific">Pseudomonas fluorescens (strain Pf0-1)</name>
    <dbReference type="NCBI Taxonomy" id="205922"/>
    <lineage>
        <taxon>Bacteria</taxon>
        <taxon>Pseudomonadati</taxon>
        <taxon>Pseudomonadota</taxon>
        <taxon>Gammaproteobacteria</taxon>
        <taxon>Pseudomonadales</taxon>
        <taxon>Pseudomonadaceae</taxon>
        <taxon>Pseudomonas</taxon>
    </lineage>
</organism>
<gene>
    <name evidence="1" type="primary">rsmJ</name>
    <name type="ordered locus">Pfl01_1077</name>
</gene>
<accession>Q3KHD6</accession>
<comment type="function">
    <text evidence="1">Specifically methylates the guanosine in position 1516 of 16S rRNA.</text>
</comment>
<comment type="catalytic activity">
    <reaction evidence="1">
        <text>guanosine(1516) in 16S rRNA + S-adenosyl-L-methionine = N(2)-methylguanosine(1516) in 16S rRNA + S-adenosyl-L-homocysteine + H(+)</text>
        <dbReference type="Rhea" id="RHEA:43220"/>
        <dbReference type="Rhea" id="RHEA-COMP:10412"/>
        <dbReference type="Rhea" id="RHEA-COMP:10413"/>
        <dbReference type="ChEBI" id="CHEBI:15378"/>
        <dbReference type="ChEBI" id="CHEBI:57856"/>
        <dbReference type="ChEBI" id="CHEBI:59789"/>
        <dbReference type="ChEBI" id="CHEBI:74269"/>
        <dbReference type="ChEBI" id="CHEBI:74481"/>
        <dbReference type="EC" id="2.1.1.242"/>
    </reaction>
</comment>
<comment type="subcellular location">
    <subcellularLocation>
        <location evidence="1">Cytoplasm</location>
    </subcellularLocation>
</comment>
<comment type="similarity">
    <text evidence="1">Belongs to the methyltransferase superfamily. RsmJ family.</text>
</comment>
<comment type="sequence caution" evidence="2">
    <conflict type="erroneous initiation">
        <sequence resource="EMBL-CDS" id="ABA72820"/>
    </conflict>
    <text>Extended N-terminus.</text>
</comment>
<sequence length="260" mass="28098">MIEQPAACRIHVEALGPTFEAQAEQWAQRLNLPLQVADGEFALQVGEQGLQLQQLGPDAPGPVRVDFVEGGAAHRRLYGGGSGQMIAKAVGIAQGVRPRVLDATAGLGKDAFVLASLGCEMSLIERQPLIGALLEDGLARAAEDFDVAPIVARMKLLKGNSIEVMRNWEGEPPQVIYLDPMFPHREKTALVKKEMRLFRPLVGDDPDAPALLEAALALATHRVVVKRPRKAPCIEGPKPSHALDGKSSRYDIYPKKALKA</sequence>
<feature type="chain" id="PRO_0000244276" description="Ribosomal RNA small subunit methyltransferase J">
    <location>
        <begin position="1"/>
        <end position="260"/>
    </location>
</feature>
<feature type="binding site" evidence="1">
    <location>
        <begin position="125"/>
        <end position="126"/>
    </location>
    <ligand>
        <name>S-adenosyl-L-methionine</name>
        <dbReference type="ChEBI" id="CHEBI:59789"/>
    </ligand>
</feature>
<feature type="binding site" evidence="1">
    <location>
        <position position="179"/>
    </location>
    <ligand>
        <name>S-adenosyl-L-methionine</name>
        <dbReference type="ChEBI" id="CHEBI:59789"/>
    </ligand>
</feature>
<name>RSMJ_PSEPF</name>